<sequence>MARLSGVERPDDSGLRERKAKAVEEPVKQPVEGADGAAAAAQAKKKTIGRTPDGTDILVLSIIGLHIVLLYLLPSFLRIPIFAVLFLSWRAAYNIGIGWLLHMQSNHSTMVLWARQTKIFVNPATGDNPHPQLYSFIKRELETKIPEDYSFEDAPIEYNTWLVFRRVVDLILMCDFTSYCLFAIACGSRPAEENFLVLILRWVVGLGLVLFNLWVKLDAHRVVKDFAWYWGDFFYLVDQELTFDGVFEMAPHPMYSVGYAGYYGISLMAASYKVLFISILAHAAQFAFLVLVENPHIEKTYNAPPPRKRTIESHAGLAGEEKSSRRPSESSEMVPPPSPVALPSSTHNLVGVKNLDLHRITDSSIILIQVLFFALTMLTPSTPIYQFFFVLNAAIWRLWYSVGIGYILNCQSHRREWTRHFVKFGETKEEAWNQWKGTYHLSMTLCYASFIAAAWKMYTLPENWGYGLAILKHVLGAGLIALQIWTSVSIYDSLGEFGWFFGDFFFDEAPKLTYSGIYRFLNNPERVLGLAGVWGAALITSSRAMIFLALLSHTLGIAFIQLVERPHMQKLYGRGLRQDAGLVRSIKRSLPPSFKQLHGSVDRILDESIEFIEEVLDTARPKLAAGVTTFVKDTSELFHKYPARITITRIEPDLAGYDMNDYSINVDTSDCITIRDGAEDKSEVLVFEYGSPIKVNWTAPLNHSKRDWVGLYMIGQNPSREVTNVSSWGRWVATNHGSFDSVLSEKGLIASDVVVSKPGTSNTSKKPSAKSSSGKKSSTSSSSHEVASGQMVFSGDKLWWTQGVFEFRYHHNGKHNVMATSRPFEIRIPKFDDGQIPSHVSSNGNGFMTTAIEQALLPIVQNCFDRDPEISPQTAEEPFGCETEGDLKYAKRVVYAVHQMFGIEFATEVVRADGNVQNLAWRICNAKKVLAPYSMRKSNGASTPTGESEEMK</sequence>
<evidence type="ECO:0000255" key="1">
    <source>
        <dbReference type="HAMAP-Rule" id="MF_03217"/>
    </source>
</evidence>
<evidence type="ECO:0000256" key="2">
    <source>
        <dbReference type="SAM" id="MobiDB-lite"/>
    </source>
</evidence>
<organism>
    <name type="scientific">Arthroderma benhamiae (strain ATCC MYA-4681 / CBS 112371)</name>
    <name type="common">Trichophyton mentagrophytes</name>
    <dbReference type="NCBI Taxonomy" id="663331"/>
    <lineage>
        <taxon>Eukaryota</taxon>
        <taxon>Fungi</taxon>
        <taxon>Dikarya</taxon>
        <taxon>Ascomycota</taxon>
        <taxon>Pezizomycotina</taxon>
        <taxon>Eurotiomycetes</taxon>
        <taxon>Eurotiomycetidae</taxon>
        <taxon>Onygenales</taxon>
        <taxon>Arthrodermataceae</taxon>
        <taxon>Trichophyton</taxon>
    </lineage>
</organism>
<accession>D4AT37</accession>
<dbReference type="EC" id="2.1.1.17" evidence="1"/>
<dbReference type="EMBL" id="ABSU01000008">
    <property type="protein sequence ID" value="EFE33937.1"/>
    <property type="molecule type" value="Genomic_DNA"/>
</dbReference>
<dbReference type="RefSeq" id="XP_003014840.1">
    <property type="nucleotide sequence ID" value="XM_003014794.1"/>
</dbReference>
<dbReference type="SMR" id="D4AT37"/>
<dbReference type="STRING" id="663331.D4AT37"/>
<dbReference type="GeneID" id="9520377"/>
<dbReference type="KEGG" id="abe:ARB_07401"/>
<dbReference type="eggNOG" id="ENOG502QRGH">
    <property type="taxonomic scope" value="Eukaryota"/>
</dbReference>
<dbReference type="HOGENOM" id="CLU_005987_0_1_1"/>
<dbReference type="OMA" id="RIWYSVG"/>
<dbReference type="UniPathway" id="UPA00753"/>
<dbReference type="Proteomes" id="UP000008866">
    <property type="component" value="Unassembled WGS sequence"/>
</dbReference>
<dbReference type="GO" id="GO:0005789">
    <property type="term" value="C:endoplasmic reticulum membrane"/>
    <property type="evidence" value="ECO:0007669"/>
    <property type="project" value="UniProtKB-SubCell"/>
</dbReference>
<dbReference type="GO" id="GO:0004608">
    <property type="term" value="F:phosphatidylethanolamine N-methyltransferase activity"/>
    <property type="evidence" value="ECO:0007669"/>
    <property type="project" value="UniProtKB-UniRule"/>
</dbReference>
<dbReference type="GO" id="GO:0032259">
    <property type="term" value="P:methylation"/>
    <property type="evidence" value="ECO:0007669"/>
    <property type="project" value="UniProtKB-KW"/>
</dbReference>
<dbReference type="GO" id="GO:0006656">
    <property type="term" value="P:phosphatidylcholine biosynthetic process"/>
    <property type="evidence" value="ECO:0007669"/>
    <property type="project" value="UniProtKB-UniRule"/>
</dbReference>
<dbReference type="FunFam" id="2.60.40.2840:FF:000006">
    <property type="entry name" value="Phosphatidylethanolamine N-methyltransferase"/>
    <property type="match status" value="1"/>
</dbReference>
<dbReference type="Gene3D" id="2.60.40.2840">
    <property type="match status" value="1"/>
</dbReference>
<dbReference type="HAMAP" id="MF_03217">
    <property type="entry name" value="PEMT"/>
    <property type="match status" value="1"/>
</dbReference>
<dbReference type="InterPro" id="IPR007318">
    <property type="entry name" value="Phopholipid_MeTrfase"/>
</dbReference>
<dbReference type="InterPro" id="IPR016219">
    <property type="entry name" value="Phosphatid-EA_MeTrfase_fun"/>
</dbReference>
<dbReference type="PANTHER" id="PTHR32138">
    <property type="entry name" value="PHOSPHATIDYLETHANOLAMINE N-METHYLTRANSFERASE"/>
    <property type="match status" value="1"/>
</dbReference>
<dbReference type="PANTHER" id="PTHR32138:SF0">
    <property type="entry name" value="PHOSPHATIDYLETHANOLAMINE N-METHYLTRANSFERASE"/>
    <property type="match status" value="1"/>
</dbReference>
<dbReference type="Pfam" id="PF04191">
    <property type="entry name" value="PEMT"/>
    <property type="match status" value="2"/>
</dbReference>
<dbReference type="PIRSF" id="PIRSF000383">
    <property type="entry name" value="PEAMT"/>
    <property type="match status" value="1"/>
</dbReference>
<dbReference type="PROSITE" id="PS51598">
    <property type="entry name" value="SAM_CHO2"/>
    <property type="match status" value="1"/>
</dbReference>
<reference key="1">
    <citation type="journal article" date="2011" name="Genome Biol.">
        <title>Comparative and functional genomics provide insights into the pathogenicity of dermatophytic fungi.</title>
        <authorList>
            <person name="Burmester A."/>
            <person name="Shelest E."/>
            <person name="Gloeckner G."/>
            <person name="Heddergott C."/>
            <person name="Schindler S."/>
            <person name="Staib P."/>
            <person name="Heidel A."/>
            <person name="Felder M."/>
            <person name="Petzold A."/>
            <person name="Szafranski K."/>
            <person name="Feuermann M."/>
            <person name="Pedruzzi I."/>
            <person name="Priebe S."/>
            <person name="Groth M."/>
            <person name="Winkler R."/>
            <person name="Li W."/>
            <person name="Kniemeyer O."/>
            <person name="Schroeckh V."/>
            <person name="Hertweck C."/>
            <person name="Hube B."/>
            <person name="White T.C."/>
            <person name="Platzer M."/>
            <person name="Guthke R."/>
            <person name="Heitman J."/>
            <person name="Woestemeyer J."/>
            <person name="Zipfel P.F."/>
            <person name="Monod M."/>
            <person name="Brakhage A.A."/>
        </authorList>
    </citation>
    <scope>NUCLEOTIDE SEQUENCE [LARGE SCALE GENOMIC DNA]</scope>
    <source>
        <strain>ATCC MYA-4681 / CBS 112371</strain>
    </source>
</reference>
<proteinExistence type="inferred from homology"/>
<comment type="function">
    <text evidence="1">Catalyzes the first step of the methylation pathway of phosphatidylcholine biosynthesis, the SAM-dependent methylation of phosphatidylethanolamine (PE) to phosphatidylmonomethylethanolamine (PMME).</text>
</comment>
<comment type="catalytic activity">
    <reaction evidence="1">
        <text>a 1,2-diacyl-sn-glycero-3-phosphoethanolamine + S-adenosyl-L-methionine = a 1,2-diacyl-sn-glycero-3-phospho-N-methylethanolamine + S-adenosyl-L-homocysteine + H(+)</text>
        <dbReference type="Rhea" id="RHEA:11164"/>
        <dbReference type="ChEBI" id="CHEBI:15378"/>
        <dbReference type="ChEBI" id="CHEBI:57856"/>
        <dbReference type="ChEBI" id="CHEBI:59789"/>
        <dbReference type="ChEBI" id="CHEBI:64573"/>
        <dbReference type="ChEBI" id="CHEBI:64612"/>
        <dbReference type="EC" id="2.1.1.17"/>
    </reaction>
</comment>
<comment type="pathway">
    <text evidence="1">Phospholipid metabolism; phosphatidylcholine biosynthesis.</text>
</comment>
<comment type="subcellular location">
    <subcellularLocation>
        <location evidence="1">Endoplasmic reticulum membrane</location>
        <topology evidence="1">Multi-pass membrane protein</topology>
    </subcellularLocation>
</comment>
<comment type="similarity">
    <text evidence="1">Belongs to the class VI-like SAM-binding methyltransferase superfamily. CHO2 family.</text>
</comment>
<protein>
    <recommendedName>
        <fullName evidence="1">Phosphatidylethanolamine N-methyltransferase</fullName>
        <shortName evidence="1">PE methyltransferase</shortName>
        <shortName evidence="1">PEAMT</shortName>
        <shortName evidence="1">PEMT</shortName>
        <ecNumber evidence="1">2.1.1.17</ecNumber>
    </recommendedName>
</protein>
<name>CHO2_ARTBC</name>
<keyword id="KW-0256">Endoplasmic reticulum</keyword>
<keyword id="KW-0444">Lipid biosynthesis</keyword>
<keyword id="KW-0443">Lipid metabolism</keyword>
<keyword id="KW-0472">Membrane</keyword>
<keyword id="KW-0489">Methyltransferase</keyword>
<keyword id="KW-0594">Phospholipid biosynthesis</keyword>
<keyword id="KW-1208">Phospholipid metabolism</keyword>
<keyword id="KW-1185">Reference proteome</keyword>
<keyword id="KW-0949">S-adenosyl-L-methionine</keyword>
<keyword id="KW-0808">Transferase</keyword>
<keyword id="KW-0812">Transmembrane</keyword>
<keyword id="KW-1133">Transmembrane helix</keyword>
<gene>
    <name type="primary">CHO2</name>
    <name type="ORF">ARB_07401</name>
</gene>
<feature type="chain" id="PRO_0000405871" description="Phosphatidylethanolamine N-methyltransferase">
    <location>
        <begin position="1"/>
        <end position="952"/>
    </location>
</feature>
<feature type="topological domain" description="Lumenal" evidence="1">
    <location>
        <begin position="1"/>
        <end position="56"/>
    </location>
</feature>
<feature type="transmembrane region" description="Helical" evidence="1">
    <location>
        <begin position="57"/>
        <end position="77"/>
    </location>
</feature>
<feature type="topological domain" description="Cytoplasmic" evidence="1">
    <location>
        <begin position="78"/>
        <end position="80"/>
    </location>
</feature>
<feature type="transmembrane region" description="Helical" evidence="1">
    <location>
        <begin position="81"/>
        <end position="101"/>
    </location>
</feature>
<feature type="topological domain" description="Lumenal" evidence="1">
    <location>
        <begin position="102"/>
        <end position="166"/>
    </location>
</feature>
<feature type="transmembrane region" description="Helical" evidence="1">
    <location>
        <begin position="167"/>
        <end position="187"/>
    </location>
</feature>
<feature type="topological domain" description="Cytoplasmic" evidence="1">
    <location>
        <begin position="188"/>
        <end position="194"/>
    </location>
</feature>
<feature type="transmembrane region" description="Helical" evidence="1">
    <location>
        <begin position="195"/>
        <end position="215"/>
    </location>
</feature>
<feature type="topological domain" description="Lumenal" evidence="1">
    <location>
        <begin position="216"/>
        <end position="248"/>
    </location>
</feature>
<feature type="transmembrane region" description="Helical" evidence="1">
    <location>
        <begin position="249"/>
        <end position="269"/>
    </location>
</feature>
<feature type="topological domain" description="Cytoplasmic" evidence="1">
    <location>
        <begin position="270"/>
        <end position="271"/>
    </location>
</feature>
<feature type="transmembrane region" description="Helical" evidence="1">
    <location>
        <begin position="272"/>
        <end position="292"/>
    </location>
</feature>
<feature type="topological domain" description="Lumenal" evidence="1">
    <location>
        <begin position="293"/>
        <end position="364"/>
    </location>
</feature>
<feature type="transmembrane region" description="Helical" evidence="1">
    <location>
        <begin position="365"/>
        <end position="385"/>
    </location>
</feature>
<feature type="topological domain" description="Cytoplasmic" evidence="1">
    <location>
        <position position="386"/>
    </location>
</feature>
<feature type="transmembrane region" description="Helical" evidence="1">
    <location>
        <begin position="387"/>
        <end position="407"/>
    </location>
</feature>
<feature type="topological domain" description="Lumenal" evidence="1">
    <location>
        <begin position="408"/>
        <end position="440"/>
    </location>
</feature>
<feature type="transmembrane region" description="Helical" evidence="1">
    <location>
        <begin position="441"/>
        <end position="461"/>
    </location>
</feature>
<feature type="topological domain" description="Cytoplasmic" evidence="1">
    <location>
        <begin position="462"/>
        <end position="463"/>
    </location>
</feature>
<feature type="transmembrane region" description="Helical" evidence="1">
    <location>
        <begin position="464"/>
        <end position="484"/>
    </location>
</feature>
<feature type="topological domain" description="Lumenal" evidence="1">
    <location>
        <begin position="485"/>
        <end position="543"/>
    </location>
</feature>
<feature type="transmembrane region" description="Helical" evidence="1">
    <location>
        <begin position="544"/>
        <end position="564"/>
    </location>
</feature>
<feature type="topological domain" description="Cytoplasmic" evidence="1">
    <location>
        <begin position="565"/>
        <end position="952"/>
    </location>
</feature>
<feature type="region of interest" description="Disordered" evidence="2">
    <location>
        <begin position="1"/>
        <end position="27"/>
    </location>
</feature>
<feature type="region of interest" description="Disordered" evidence="2">
    <location>
        <begin position="302"/>
        <end position="342"/>
    </location>
</feature>
<feature type="region of interest" description="Disordered" evidence="2">
    <location>
        <begin position="756"/>
        <end position="786"/>
    </location>
</feature>
<feature type="compositionally biased region" description="Basic and acidic residues" evidence="2">
    <location>
        <begin position="319"/>
        <end position="329"/>
    </location>
</feature>
<feature type="compositionally biased region" description="Low complexity" evidence="2">
    <location>
        <begin position="760"/>
        <end position="783"/>
    </location>
</feature>